<name>PYRE_THIDA</name>
<gene>
    <name evidence="1" type="primary">pyrE</name>
    <name type="ordered locus">Tbd_0255</name>
</gene>
<organism>
    <name type="scientific">Thiobacillus denitrificans (strain ATCC 25259 / T1)</name>
    <dbReference type="NCBI Taxonomy" id="292415"/>
    <lineage>
        <taxon>Bacteria</taxon>
        <taxon>Pseudomonadati</taxon>
        <taxon>Pseudomonadota</taxon>
        <taxon>Betaproteobacteria</taxon>
        <taxon>Nitrosomonadales</taxon>
        <taxon>Thiobacillaceae</taxon>
        <taxon>Thiobacillus</taxon>
    </lineage>
</organism>
<feature type="chain" id="PRO_1000066322" description="Orotate phosphoribosyltransferase">
    <location>
        <begin position="1"/>
        <end position="212"/>
    </location>
</feature>
<feature type="binding site" description="in other chain" evidence="1">
    <location>
        <position position="26"/>
    </location>
    <ligand>
        <name>5-phospho-alpha-D-ribose 1-diphosphate</name>
        <dbReference type="ChEBI" id="CHEBI:58017"/>
        <note>ligand shared between dimeric partners</note>
    </ligand>
</feature>
<feature type="binding site" evidence="1">
    <location>
        <begin position="34"/>
        <end position="35"/>
    </location>
    <ligand>
        <name>orotate</name>
        <dbReference type="ChEBI" id="CHEBI:30839"/>
    </ligand>
</feature>
<feature type="binding site" description="in other chain" evidence="1">
    <location>
        <begin position="72"/>
        <end position="73"/>
    </location>
    <ligand>
        <name>5-phospho-alpha-D-ribose 1-diphosphate</name>
        <dbReference type="ChEBI" id="CHEBI:58017"/>
        <note>ligand shared between dimeric partners</note>
    </ligand>
</feature>
<feature type="binding site" evidence="1">
    <location>
        <position position="98"/>
    </location>
    <ligand>
        <name>5-phospho-alpha-D-ribose 1-diphosphate</name>
        <dbReference type="ChEBI" id="CHEBI:58017"/>
        <note>ligand shared between dimeric partners</note>
    </ligand>
</feature>
<feature type="binding site" description="in other chain" evidence="1">
    <location>
        <position position="99"/>
    </location>
    <ligand>
        <name>5-phospho-alpha-D-ribose 1-diphosphate</name>
        <dbReference type="ChEBI" id="CHEBI:58017"/>
        <note>ligand shared between dimeric partners</note>
    </ligand>
</feature>
<feature type="binding site" evidence="1">
    <location>
        <position position="102"/>
    </location>
    <ligand>
        <name>5-phospho-alpha-D-ribose 1-diphosphate</name>
        <dbReference type="ChEBI" id="CHEBI:58017"/>
        <note>ligand shared between dimeric partners</note>
    </ligand>
</feature>
<feature type="binding site" evidence="1">
    <location>
        <position position="104"/>
    </location>
    <ligand>
        <name>5-phospho-alpha-D-ribose 1-diphosphate</name>
        <dbReference type="ChEBI" id="CHEBI:58017"/>
        <note>ligand shared between dimeric partners</note>
    </ligand>
</feature>
<feature type="binding site" description="in other chain" evidence="1">
    <location>
        <begin position="123"/>
        <end position="131"/>
    </location>
    <ligand>
        <name>5-phospho-alpha-D-ribose 1-diphosphate</name>
        <dbReference type="ChEBI" id="CHEBI:58017"/>
        <note>ligand shared between dimeric partners</note>
    </ligand>
</feature>
<feature type="binding site" evidence="1">
    <location>
        <position position="127"/>
    </location>
    <ligand>
        <name>orotate</name>
        <dbReference type="ChEBI" id="CHEBI:30839"/>
    </ligand>
</feature>
<feature type="binding site" evidence="1">
    <location>
        <position position="155"/>
    </location>
    <ligand>
        <name>orotate</name>
        <dbReference type="ChEBI" id="CHEBI:30839"/>
    </ligand>
</feature>
<sequence>MSDYRAEFVEFAVASQVLCFGEFKTKAGRLSPYFFNAGLFNDGEKLKRLGEFYAKAIVDSGIAFDVMFGPAYKGIPLAASIVIALAGMGRNVPFAFNRKEAKDHGEGGTVVGAPLQGRVLIVDDVISAGTSVRESVDLIRASDATPAGVVIALDRMERGQGDKSAVQEVREQYDIPVVAVVTLDNLVEFLERDANRRTELQAVANYRENYGV</sequence>
<dbReference type="EC" id="2.4.2.10" evidence="1"/>
<dbReference type="EMBL" id="CP000116">
    <property type="protein sequence ID" value="AAZ96208.1"/>
    <property type="molecule type" value="Genomic_DNA"/>
</dbReference>
<dbReference type="RefSeq" id="WP_011310768.1">
    <property type="nucleotide sequence ID" value="NC_007404.1"/>
</dbReference>
<dbReference type="SMR" id="Q3SM42"/>
<dbReference type="STRING" id="292415.Tbd_0255"/>
<dbReference type="KEGG" id="tbd:Tbd_0255"/>
<dbReference type="eggNOG" id="COG0461">
    <property type="taxonomic scope" value="Bacteria"/>
</dbReference>
<dbReference type="HOGENOM" id="CLU_074878_0_1_4"/>
<dbReference type="OrthoDB" id="9779060at2"/>
<dbReference type="UniPathway" id="UPA00070">
    <property type="reaction ID" value="UER00119"/>
</dbReference>
<dbReference type="Proteomes" id="UP000008291">
    <property type="component" value="Chromosome"/>
</dbReference>
<dbReference type="GO" id="GO:0005737">
    <property type="term" value="C:cytoplasm"/>
    <property type="evidence" value="ECO:0007669"/>
    <property type="project" value="TreeGrafter"/>
</dbReference>
<dbReference type="GO" id="GO:0000287">
    <property type="term" value="F:magnesium ion binding"/>
    <property type="evidence" value="ECO:0007669"/>
    <property type="project" value="UniProtKB-UniRule"/>
</dbReference>
<dbReference type="GO" id="GO:0004588">
    <property type="term" value="F:orotate phosphoribosyltransferase activity"/>
    <property type="evidence" value="ECO:0007669"/>
    <property type="project" value="UniProtKB-UniRule"/>
</dbReference>
<dbReference type="GO" id="GO:0006207">
    <property type="term" value="P:'de novo' pyrimidine nucleobase biosynthetic process"/>
    <property type="evidence" value="ECO:0007669"/>
    <property type="project" value="TreeGrafter"/>
</dbReference>
<dbReference type="GO" id="GO:0044205">
    <property type="term" value="P:'de novo' UMP biosynthetic process"/>
    <property type="evidence" value="ECO:0007669"/>
    <property type="project" value="UniProtKB-UniRule"/>
</dbReference>
<dbReference type="GO" id="GO:0046132">
    <property type="term" value="P:pyrimidine ribonucleoside biosynthetic process"/>
    <property type="evidence" value="ECO:0007669"/>
    <property type="project" value="TreeGrafter"/>
</dbReference>
<dbReference type="CDD" id="cd06223">
    <property type="entry name" value="PRTases_typeI"/>
    <property type="match status" value="1"/>
</dbReference>
<dbReference type="FunFam" id="3.40.50.2020:FF:000008">
    <property type="entry name" value="Orotate phosphoribosyltransferase"/>
    <property type="match status" value="1"/>
</dbReference>
<dbReference type="Gene3D" id="3.40.50.2020">
    <property type="match status" value="1"/>
</dbReference>
<dbReference type="HAMAP" id="MF_01208">
    <property type="entry name" value="PyrE"/>
    <property type="match status" value="1"/>
</dbReference>
<dbReference type="InterPro" id="IPR023031">
    <property type="entry name" value="OPRT"/>
</dbReference>
<dbReference type="InterPro" id="IPR004467">
    <property type="entry name" value="Or_phspho_trans_dom"/>
</dbReference>
<dbReference type="InterPro" id="IPR000836">
    <property type="entry name" value="PRibTrfase_dom"/>
</dbReference>
<dbReference type="InterPro" id="IPR029057">
    <property type="entry name" value="PRTase-like"/>
</dbReference>
<dbReference type="NCBIfam" id="TIGR00336">
    <property type="entry name" value="pyrE"/>
    <property type="match status" value="1"/>
</dbReference>
<dbReference type="PANTHER" id="PTHR46683">
    <property type="entry name" value="OROTATE PHOSPHORIBOSYLTRANSFERASE 1-RELATED"/>
    <property type="match status" value="1"/>
</dbReference>
<dbReference type="PANTHER" id="PTHR46683:SF1">
    <property type="entry name" value="OROTATE PHOSPHORIBOSYLTRANSFERASE 1-RELATED"/>
    <property type="match status" value="1"/>
</dbReference>
<dbReference type="Pfam" id="PF00156">
    <property type="entry name" value="Pribosyltran"/>
    <property type="match status" value="1"/>
</dbReference>
<dbReference type="SUPFAM" id="SSF53271">
    <property type="entry name" value="PRTase-like"/>
    <property type="match status" value="1"/>
</dbReference>
<dbReference type="PROSITE" id="PS00103">
    <property type="entry name" value="PUR_PYR_PR_TRANSFER"/>
    <property type="match status" value="1"/>
</dbReference>
<accession>Q3SM42</accession>
<protein>
    <recommendedName>
        <fullName evidence="1">Orotate phosphoribosyltransferase</fullName>
        <shortName evidence="1">OPRT</shortName>
        <shortName evidence="1">OPRTase</shortName>
        <ecNumber evidence="1">2.4.2.10</ecNumber>
    </recommendedName>
</protein>
<proteinExistence type="inferred from homology"/>
<comment type="function">
    <text evidence="1">Catalyzes the transfer of a ribosyl phosphate group from 5-phosphoribose 1-diphosphate to orotate, leading to the formation of orotidine monophosphate (OMP).</text>
</comment>
<comment type="catalytic activity">
    <reaction evidence="1">
        <text>orotidine 5'-phosphate + diphosphate = orotate + 5-phospho-alpha-D-ribose 1-diphosphate</text>
        <dbReference type="Rhea" id="RHEA:10380"/>
        <dbReference type="ChEBI" id="CHEBI:30839"/>
        <dbReference type="ChEBI" id="CHEBI:33019"/>
        <dbReference type="ChEBI" id="CHEBI:57538"/>
        <dbReference type="ChEBI" id="CHEBI:58017"/>
        <dbReference type="EC" id="2.4.2.10"/>
    </reaction>
</comment>
<comment type="cofactor">
    <cofactor evidence="1">
        <name>Mg(2+)</name>
        <dbReference type="ChEBI" id="CHEBI:18420"/>
    </cofactor>
</comment>
<comment type="pathway">
    <text evidence="1">Pyrimidine metabolism; UMP biosynthesis via de novo pathway; UMP from orotate: step 1/2.</text>
</comment>
<comment type="subunit">
    <text evidence="1">Homodimer.</text>
</comment>
<comment type="similarity">
    <text evidence="1">Belongs to the purine/pyrimidine phosphoribosyltransferase family. PyrE subfamily.</text>
</comment>
<evidence type="ECO:0000255" key="1">
    <source>
        <dbReference type="HAMAP-Rule" id="MF_01208"/>
    </source>
</evidence>
<keyword id="KW-0328">Glycosyltransferase</keyword>
<keyword id="KW-0460">Magnesium</keyword>
<keyword id="KW-0665">Pyrimidine biosynthesis</keyword>
<keyword id="KW-1185">Reference proteome</keyword>
<keyword id="KW-0808">Transferase</keyword>
<reference key="1">
    <citation type="journal article" date="2006" name="J. Bacteriol.">
        <title>The genome sequence of the obligately chemolithoautotrophic, facultatively anaerobic bacterium Thiobacillus denitrificans.</title>
        <authorList>
            <person name="Beller H.R."/>
            <person name="Chain P.S."/>
            <person name="Letain T.E."/>
            <person name="Chakicherla A."/>
            <person name="Larimer F.W."/>
            <person name="Richardson P.M."/>
            <person name="Coleman M.A."/>
            <person name="Wood A.P."/>
            <person name="Kelly D.P."/>
        </authorList>
    </citation>
    <scope>NUCLEOTIDE SEQUENCE [LARGE SCALE GENOMIC DNA]</scope>
    <source>
        <strain>ATCC 25259 / T1</strain>
    </source>
</reference>